<organism>
    <name type="scientific">Arabidopsis thaliana</name>
    <name type="common">Mouse-ear cress</name>
    <dbReference type="NCBI Taxonomy" id="3702"/>
    <lineage>
        <taxon>Eukaryota</taxon>
        <taxon>Viridiplantae</taxon>
        <taxon>Streptophyta</taxon>
        <taxon>Embryophyta</taxon>
        <taxon>Tracheophyta</taxon>
        <taxon>Spermatophyta</taxon>
        <taxon>Magnoliopsida</taxon>
        <taxon>eudicotyledons</taxon>
        <taxon>Gunneridae</taxon>
        <taxon>Pentapetalae</taxon>
        <taxon>rosids</taxon>
        <taxon>malvids</taxon>
        <taxon>Brassicales</taxon>
        <taxon>Brassicaceae</taxon>
        <taxon>Camelineae</taxon>
        <taxon>Arabidopsis</taxon>
    </lineage>
</organism>
<comment type="function">
    <text evidence="1">Myosin heavy chain that is required for the cell cycle-regulated transport of various organelles and proteins for their segregation. Functions by binding with its tail domain to receptor proteins on organelles and exerting force with its N-terminal motor domain against actin filaments, thereby transporting its cargo along polarized actin cables (By similarity).</text>
</comment>
<comment type="subunit">
    <text evidence="1">Homodimer.</text>
</comment>
<comment type="domain">
    <text evidence="1">IQ domain mediates interaction with calmodulin.</text>
</comment>
<comment type="domain">
    <text evidence="1">The tail domain is a globular cargo-binding domain.</text>
</comment>
<comment type="similarity">
    <text evidence="8">Belongs to the TRAFAC class myosin-kinesin ATPase superfamily. Myosin family. Plant myosin class XI subfamily.</text>
</comment>
<comment type="sequence caution" evidence="8">
    <conflict type="erroneous gene model prediction">
        <sequence resource="EMBL-CDS" id="CAA22981"/>
    </conflict>
</comment>
<comment type="sequence caution" evidence="8">
    <conflict type="erroneous gene model prediction">
        <sequence resource="EMBL-CDS" id="CAB81459"/>
    </conflict>
</comment>
<protein>
    <recommendedName>
        <fullName>Myosin-14</fullName>
    </recommendedName>
    <alternativeName>
        <fullName>Myosin XI H</fullName>
        <shortName>AtXIH</shortName>
    </alternativeName>
</protein>
<sequence>MACTTVNVGSCVWVEDPEVAWIDGEVIEVKGSDIKVKCTSGKTVAIKVSSAYPKDVEAPASGVDDMTRLAYLHEPGVLQNMKSRFDINEIYTYTGNILIAVNPFRRLPHLYNNHMMQQYKGAGFGELSPHPFAVADAAYRQMKNQGISQSILVSGESGAGKTETTKLLMQYLADMGGRAVSEGRTVEKKVLESNPVLEAFGNAKTVRNNNSSRFGKFVEIQFDQRGRISGAAIRTYLLERSRVCQVSDPERNYHCFYMLCAAPPEDIKKWKLADPRKFHYLNQSQCIELERMDDAKEYRETRKAMDVVGINSEEQEAIFQVVAAILHLGNVEFGKGKEADSSAPKDDTSNYHLKTAAELFMCDEQALEDSLCKRVIVTRGETITKCLDQESAALSRDALAKTVYSRLFDWIVNKINDSIGQDPDSEYLIGVLDIYGFESFKTNSFEQFCINLTNEKLQQHFNQHVFKMEQDEYNKEEIDWSYIEFVDNQEILDLIEKKAGGIISLLNEACMFPRATHETFAEKMYQTFKDHKHFSKPKLSRTDFTICHYAGDVTYQTEQFLEKNKDYVVAEHQTLLNASRCAFVASLFPLLAEDANKKSKFSSISSRFKQQLVTLLETLSTTEPHYIRCVKPNNLLKPLIFENQNVLQQLRCGGVMEAIRISCAGFPTRKKFEEFLERFSVLAPEVLDKSTDGWPLSSTDDVACKKLLEKVALQGYQIGKTKVFLRAGQMADLDARRNEVLGRAASRIQRKFRSYLSRKTFLMLRKVATNMQAVCRGQLSRLIFEGLRRDAAVLEIQRDIRMHLARKSYKELYFAAVSIQLGIRGMASRGRLRFQRQDKAAIMIQSHCRKFLAQLHYQRLKKAAITTQSAWRARLARKELRKLKMAAKETGVLEAAKSKLEKQVEELTWKLQLEKRMRTDMEESKTQENAKLRSALEEMQLQFKETKALHLQEVEAAKKMAETVPVLQEVPVVDTELVEKLTSENEKLKSLVSSLDQKIDETEKKFEERSKINEERLKQAIEAETTIVNLKTAVHELQEKILDVESENKILRQKSLIQASGHLPPTPVKGSQNGHFSSKESPFNGSEIETLARTQEQESDAKTRRYHLDRQRENIGALINCVVNNIGFNQGKPVAAFTIYKCLLHWKSFEAERTSVFDRLVQMIGSAIKDEGDNEHLAYWLSNTSTLLFMIQQSLKPGATPQQKTPVSTSLFGRMAMGFRSAPSSAETSAAAEAAAAAVIRPVVAKDPALLFKQQLTAYVEKIFGMIRDNLKNELQTLLSLCIQAPRTSTGRSLRSFRSSKTMRNNSPLDHWNGIYDGLNAILSTLQENFVPPVLIQNIFIQTFSFINVQLFNSLLLRRECCTFSNGEFVKSGLALLEEWCNETTEEYAGSSWDELKHIRQAVGFMVIHKKYRISYDDIAHDLCPILSVQQLYRICTLYWDDSYNTRSVSQDVIANMRVLMTEDSNNADSSAFLLDEDSSIPFSADDLSSSMKEKDFAEMKPAEELEENPAFSFLI</sequence>
<reference key="1">
    <citation type="journal article" date="1999" name="Nature">
        <title>Sequence and analysis of chromosome 4 of the plant Arabidopsis thaliana.</title>
        <authorList>
            <person name="Mayer K.F.X."/>
            <person name="Schueller C."/>
            <person name="Wambutt R."/>
            <person name="Murphy G."/>
            <person name="Volckaert G."/>
            <person name="Pohl T."/>
            <person name="Duesterhoeft A."/>
            <person name="Stiekema W."/>
            <person name="Entian K.-D."/>
            <person name="Terryn N."/>
            <person name="Harris B."/>
            <person name="Ansorge W."/>
            <person name="Brandt P."/>
            <person name="Grivell L.A."/>
            <person name="Rieger M."/>
            <person name="Weichselgartner M."/>
            <person name="de Simone V."/>
            <person name="Obermaier B."/>
            <person name="Mache R."/>
            <person name="Mueller M."/>
            <person name="Kreis M."/>
            <person name="Delseny M."/>
            <person name="Puigdomenech P."/>
            <person name="Watson M."/>
            <person name="Schmidtheini T."/>
            <person name="Reichert B."/>
            <person name="Portetelle D."/>
            <person name="Perez-Alonso M."/>
            <person name="Boutry M."/>
            <person name="Bancroft I."/>
            <person name="Vos P."/>
            <person name="Hoheisel J."/>
            <person name="Zimmermann W."/>
            <person name="Wedler H."/>
            <person name="Ridley P."/>
            <person name="Langham S.-A."/>
            <person name="McCullagh B."/>
            <person name="Bilham L."/>
            <person name="Robben J."/>
            <person name="van der Schueren J."/>
            <person name="Grymonprez B."/>
            <person name="Chuang Y.-J."/>
            <person name="Vandenbussche F."/>
            <person name="Braeken M."/>
            <person name="Weltjens I."/>
            <person name="Voet M."/>
            <person name="Bastiaens I."/>
            <person name="Aert R."/>
            <person name="Defoor E."/>
            <person name="Weitzenegger T."/>
            <person name="Bothe G."/>
            <person name="Ramsperger U."/>
            <person name="Hilbert H."/>
            <person name="Braun M."/>
            <person name="Holzer E."/>
            <person name="Brandt A."/>
            <person name="Peters S."/>
            <person name="van Staveren M."/>
            <person name="Dirkse W."/>
            <person name="Mooijman P."/>
            <person name="Klein Lankhorst R."/>
            <person name="Rose M."/>
            <person name="Hauf J."/>
            <person name="Koetter P."/>
            <person name="Berneiser S."/>
            <person name="Hempel S."/>
            <person name="Feldpausch M."/>
            <person name="Lamberth S."/>
            <person name="Van den Daele H."/>
            <person name="De Keyser A."/>
            <person name="Buysshaert C."/>
            <person name="Gielen J."/>
            <person name="Villarroel R."/>
            <person name="De Clercq R."/>
            <person name="van Montagu M."/>
            <person name="Rogers J."/>
            <person name="Cronin A."/>
            <person name="Quail M.A."/>
            <person name="Bray-Allen S."/>
            <person name="Clark L."/>
            <person name="Doggett J."/>
            <person name="Hall S."/>
            <person name="Kay M."/>
            <person name="Lennard N."/>
            <person name="McLay K."/>
            <person name="Mayes R."/>
            <person name="Pettett A."/>
            <person name="Rajandream M.A."/>
            <person name="Lyne M."/>
            <person name="Benes V."/>
            <person name="Rechmann S."/>
            <person name="Borkova D."/>
            <person name="Bloecker H."/>
            <person name="Scharfe M."/>
            <person name="Grimm M."/>
            <person name="Loehnert T.-H."/>
            <person name="Dose S."/>
            <person name="de Haan M."/>
            <person name="Maarse A.C."/>
            <person name="Schaefer M."/>
            <person name="Mueller-Auer S."/>
            <person name="Gabel C."/>
            <person name="Fuchs M."/>
            <person name="Fartmann B."/>
            <person name="Granderath K."/>
            <person name="Dauner D."/>
            <person name="Herzl A."/>
            <person name="Neumann S."/>
            <person name="Argiriou A."/>
            <person name="Vitale D."/>
            <person name="Liguori R."/>
            <person name="Piravandi E."/>
            <person name="Massenet O."/>
            <person name="Quigley F."/>
            <person name="Clabauld G."/>
            <person name="Muendlein A."/>
            <person name="Felber R."/>
            <person name="Schnabl S."/>
            <person name="Hiller R."/>
            <person name="Schmidt W."/>
            <person name="Lecharny A."/>
            <person name="Aubourg S."/>
            <person name="Chefdor F."/>
            <person name="Cooke R."/>
            <person name="Berger C."/>
            <person name="Monfort A."/>
            <person name="Casacuberta E."/>
            <person name="Gibbons T."/>
            <person name="Weber N."/>
            <person name="Vandenbol M."/>
            <person name="Bargues M."/>
            <person name="Terol J."/>
            <person name="Torres A."/>
            <person name="Perez-Perez A."/>
            <person name="Purnelle B."/>
            <person name="Bent E."/>
            <person name="Johnson S."/>
            <person name="Tacon D."/>
            <person name="Jesse T."/>
            <person name="Heijnen L."/>
            <person name="Schwarz S."/>
            <person name="Scholler P."/>
            <person name="Heber S."/>
            <person name="Francs P."/>
            <person name="Bielke C."/>
            <person name="Frishman D."/>
            <person name="Haase D."/>
            <person name="Lemcke K."/>
            <person name="Mewes H.-W."/>
            <person name="Stocker S."/>
            <person name="Zaccaria P."/>
            <person name="Bevan M."/>
            <person name="Wilson R.K."/>
            <person name="de la Bastide M."/>
            <person name="Habermann K."/>
            <person name="Parnell L."/>
            <person name="Dedhia N."/>
            <person name="Gnoj L."/>
            <person name="Schutz K."/>
            <person name="Huang E."/>
            <person name="Spiegel L."/>
            <person name="Sekhon M."/>
            <person name="Murray J."/>
            <person name="Sheet P."/>
            <person name="Cordes M."/>
            <person name="Abu-Threideh J."/>
            <person name="Stoneking T."/>
            <person name="Kalicki J."/>
            <person name="Graves T."/>
            <person name="Harmon G."/>
            <person name="Edwards J."/>
            <person name="Latreille P."/>
            <person name="Courtney L."/>
            <person name="Cloud J."/>
            <person name="Abbott A."/>
            <person name="Scott K."/>
            <person name="Johnson D."/>
            <person name="Minx P."/>
            <person name="Bentley D."/>
            <person name="Fulton B."/>
            <person name="Miller N."/>
            <person name="Greco T."/>
            <person name="Kemp K."/>
            <person name="Kramer J."/>
            <person name="Fulton L."/>
            <person name="Mardis E."/>
            <person name="Dante M."/>
            <person name="Pepin K."/>
            <person name="Hillier L.W."/>
            <person name="Nelson J."/>
            <person name="Spieth J."/>
            <person name="Ryan E."/>
            <person name="Andrews S."/>
            <person name="Geisel C."/>
            <person name="Layman D."/>
            <person name="Du H."/>
            <person name="Ali J."/>
            <person name="Berghoff A."/>
            <person name="Jones K."/>
            <person name="Drone K."/>
            <person name="Cotton M."/>
            <person name="Joshu C."/>
            <person name="Antonoiu B."/>
            <person name="Zidanic M."/>
            <person name="Strong C."/>
            <person name="Sun H."/>
            <person name="Lamar B."/>
            <person name="Yordan C."/>
            <person name="Ma P."/>
            <person name="Zhong J."/>
            <person name="Preston R."/>
            <person name="Vil D."/>
            <person name="Shekher M."/>
            <person name="Matero A."/>
            <person name="Shah R."/>
            <person name="Swaby I.K."/>
            <person name="O'Shaughnessy A."/>
            <person name="Rodriguez M."/>
            <person name="Hoffman J."/>
            <person name="Till S."/>
            <person name="Granat S."/>
            <person name="Shohdy N."/>
            <person name="Hasegawa A."/>
            <person name="Hameed A."/>
            <person name="Lodhi M."/>
            <person name="Johnson A."/>
            <person name="Chen E."/>
            <person name="Marra M.A."/>
            <person name="Martienssen R."/>
            <person name="McCombie W.R."/>
        </authorList>
    </citation>
    <scope>NUCLEOTIDE SEQUENCE [LARGE SCALE GENOMIC DNA]</scope>
    <source>
        <strain>cv. Columbia</strain>
    </source>
</reference>
<reference key="2">
    <citation type="journal article" date="2017" name="Plant J.">
        <title>Araport11: a complete reannotation of the Arabidopsis thaliana reference genome.</title>
        <authorList>
            <person name="Cheng C.Y."/>
            <person name="Krishnakumar V."/>
            <person name="Chan A.P."/>
            <person name="Thibaud-Nissen F."/>
            <person name="Schobel S."/>
            <person name="Town C.D."/>
        </authorList>
    </citation>
    <scope>GENOME REANNOTATION</scope>
    <source>
        <strain>cv. Columbia</strain>
    </source>
</reference>
<reference key="3">
    <citation type="journal article" date="2000" name="J. Cell Sci.">
        <title>A myosin family tree.</title>
        <authorList>
            <person name="Hodge T."/>
            <person name="Cope M.J."/>
        </authorList>
    </citation>
    <scope>GENE FAMILY</scope>
</reference>
<reference key="4">
    <citation type="journal article" date="2001" name="Genome Biol.">
        <title>Analysis of the myosins encoded in the recently completed Arabidopsis thaliana genome sequence.</title>
        <authorList>
            <person name="Reddy A.S."/>
            <person name="Day I.S."/>
        </authorList>
    </citation>
    <scope>GENE FAMILY</scope>
</reference>
<reference key="5">
    <citation type="journal article" date="2011" name="Plant Physiol.">
        <title>Expression, splicing, and evolution of the myosin gene family in plants.</title>
        <authorList>
            <person name="Peremyslov V.V."/>
            <person name="Mockler T.C."/>
            <person name="Filichkin S.A."/>
            <person name="Fox S.E."/>
            <person name="Jaiswal P."/>
            <person name="Makarova K.S."/>
            <person name="Koonin E.V."/>
            <person name="Dolja V.V."/>
        </authorList>
    </citation>
    <scope>GENE FAMILY</scope>
    <scope>NOMENCLATURE</scope>
</reference>
<name>MYO14_ARATH</name>
<proteinExistence type="inferred from homology"/>
<dbReference type="EMBL" id="AL035353">
    <property type="protein sequence ID" value="CAA22981.1"/>
    <property type="status" value="ALT_SEQ"/>
    <property type="molecule type" value="Genomic_DNA"/>
</dbReference>
<dbReference type="EMBL" id="AL161573">
    <property type="protein sequence ID" value="CAB81459.1"/>
    <property type="status" value="ALT_SEQ"/>
    <property type="molecule type" value="Genomic_DNA"/>
</dbReference>
<dbReference type="EMBL" id="CP002687">
    <property type="protein sequence ID" value="AEE85533.1"/>
    <property type="molecule type" value="Genomic_DNA"/>
</dbReference>
<dbReference type="PIR" id="F85334">
    <property type="entry name" value="F85334"/>
</dbReference>
<dbReference type="PIR" id="T04528">
    <property type="entry name" value="T04528"/>
</dbReference>
<dbReference type="RefSeq" id="NP_194600.2">
    <property type="nucleotide sequence ID" value="NM_119015.4"/>
</dbReference>
<dbReference type="SMR" id="F4JM19"/>
<dbReference type="FunCoup" id="F4JM19">
    <property type="interactions" value="1442"/>
</dbReference>
<dbReference type="STRING" id="3702.F4JM19"/>
<dbReference type="iPTMnet" id="F4JM19"/>
<dbReference type="MetOSite" id="F4JM19"/>
<dbReference type="PaxDb" id="3702-AT4G28710.1"/>
<dbReference type="ProteomicsDB" id="248916"/>
<dbReference type="EnsemblPlants" id="AT4G28710.1">
    <property type="protein sequence ID" value="AT4G28710.1"/>
    <property type="gene ID" value="AT4G28710"/>
</dbReference>
<dbReference type="GeneID" id="828991"/>
<dbReference type="Gramene" id="AT4G28710.1">
    <property type="protein sequence ID" value="AT4G28710.1"/>
    <property type="gene ID" value="AT4G28710"/>
</dbReference>
<dbReference type="KEGG" id="ath:AT4G28710"/>
<dbReference type="Araport" id="AT4G28710"/>
<dbReference type="TAIR" id="AT4G28710">
    <property type="gene designation" value="XIH"/>
</dbReference>
<dbReference type="eggNOG" id="KOG0160">
    <property type="taxonomic scope" value="Eukaryota"/>
</dbReference>
<dbReference type="HOGENOM" id="CLU_000192_3_1_1"/>
<dbReference type="InParanoid" id="F4JM19"/>
<dbReference type="OMA" id="RDIRMHL"/>
<dbReference type="PRO" id="PR:F4JM19"/>
<dbReference type="Proteomes" id="UP000006548">
    <property type="component" value="Chromosome 4"/>
</dbReference>
<dbReference type="ExpressionAtlas" id="F4JM19">
    <property type="expression patterns" value="baseline and differential"/>
</dbReference>
<dbReference type="GO" id="GO:0016459">
    <property type="term" value="C:myosin complex"/>
    <property type="evidence" value="ECO:0007669"/>
    <property type="project" value="UniProtKB-KW"/>
</dbReference>
<dbReference type="GO" id="GO:0003779">
    <property type="term" value="F:actin binding"/>
    <property type="evidence" value="ECO:0007669"/>
    <property type="project" value="UniProtKB-KW"/>
</dbReference>
<dbReference type="GO" id="GO:0005524">
    <property type="term" value="F:ATP binding"/>
    <property type="evidence" value="ECO:0007669"/>
    <property type="project" value="UniProtKB-KW"/>
</dbReference>
<dbReference type="GO" id="GO:0005516">
    <property type="term" value="F:calmodulin binding"/>
    <property type="evidence" value="ECO:0007669"/>
    <property type="project" value="UniProtKB-KW"/>
</dbReference>
<dbReference type="GO" id="GO:0003774">
    <property type="term" value="F:cytoskeletal motor activity"/>
    <property type="evidence" value="ECO:0000250"/>
    <property type="project" value="TAIR"/>
</dbReference>
<dbReference type="GO" id="GO:0007015">
    <property type="term" value="P:actin filament organization"/>
    <property type="evidence" value="ECO:0007669"/>
    <property type="project" value="InterPro"/>
</dbReference>
<dbReference type="GO" id="GO:0030048">
    <property type="term" value="P:actin filament-based movement"/>
    <property type="evidence" value="ECO:0000304"/>
    <property type="project" value="TAIR"/>
</dbReference>
<dbReference type="CDD" id="cd23767">
    <property type="entry name" value="IQCD"/>
    <property type="match status" value="1"/>
</dbReference>
<dbReference type="CDD" id="cd15475">
    <property type="entry name" value="MyosinXI_CBD"/>
    <property type="match status" value="1"/>
</dbReference>
<dbReference type="CDD" id="cd01384">
    <property type="entry name" value="MYSc_Myo11"/>
    <property type="match status" value="1"/>
</dbReference>
<dbReference type="FunFam" id="1.20.58.530:FF:000002">
    <property type="entry name" value="Class V myosin"/>
    <property type="match status" value="1"/>
</dbReference>
<dbReference type="FunFam" id="1.20.120.720:FF:000011">
    <property type="entry name" value="Myosin 2"/>
    <property type="match status" value="1"/>
</dbReference>
<dbReference type="FunFam" id="1.10.10.820:FF:000001">
    <property type="entry name" value="Myosin heavy chain"/>
    <property type="match status" value="1"/>
</dbReference>
<dbReference type="FunFam" id="1.20.5.190:FF:000018">
    <property type="entry name" value="Myosin XI D"/>
    <property type="match status" value="1"/>
</dbReference>
<dbReference type="FunFam" id="1.20.5.190:FF:000001">
    <property type="entry name" value="unconventional myosin-Va"/>
    <property type="match status" value="2"/>
</dbReference>
<dbReference type="Gene3D" id="1.10.10.820">
    <property type="match status" value="1"/>
</dbReference>
<dbReference type="Gene3D" id="1.20.5.190">
    <property type="match status" value="3"/>
</dbReference>
<dbReference type="Gene3D" id="1.20.58.530">
    <property type="match status" value="1"/>
</dbReference>
<dbReference type="Gene3D" id="6.20.240.20">
    <property type="match status" value="1"/>
</dbReference>
<dbReference type="Gene3D" id="3.40.850.10">
    <property type="entry name" value="Kinesin motor domain"/>
    <property type="match status" value="1"/>
</dbReference>
<dbReference type="Gene3D" id="1.20.120.720">
    <property type="entry name" value="Myosin VI head, motor domain, U50 subdomain"/>
    <property type="match status" value="1"/>
</dbReference>
<dbReference type="InterPro" id="IPR002710">
    <property type="entry name" value="Dilute_dom"/>
</dbReference>
<dbReference type="InterPro" id="IPR000048">
    <property type="entry name" value="IQ_motif_EF-hand-BS"/>
</dbReference>
<dbReference type="InterPro" id="IPR036961">
    <property type="entry name" value="Kinesin_motor_dom_sf"/>
</dbReference>
<dbReference type="InterPro" id="IPR001609">
    <property type="entry name" value="Myosin_head_motor_dom-like"/>
</dbReference>
<dbReference type="InterPro" id="IPR004009">
    <property type="entry name" value="Myosin_N"/>
</dbReference>
<dbReference type="InterPro" id="IPR037975">
    <property type="entry name" value="MyosinXI_CBD"/>
</dbReference>
<dbReference type="InterPro" id="IPR036018">
    <property type="entry name" value="MYSc_Myo11"/>
</dbReference>
<dbReference type="InterPro" id="IPR027417">
    <property type="entry name" value="P-loop_NTPase"/>
</dbReference>
<dbReference type="PANTHER" id="PTHR13140">
    <property type="entry name" value="MYOSIN"/>
    <property type="match status" value="1"/>
</dbReference>
<dbReference type="PANTHER" id="PTHR13140:SF851">
    <property type="entry name" value="MYOSIN-14"/>
    <property type="match status" value="1"/>
</dbReference>
<dbReference type="Pfam" id="PF01843">
    <property type="entry name" value="DIL"/>
    <property type="match status" value="1"/>
</dbReference>
<dbReference type="Pfam" id="PF00612">
    <property type="entry name" value="IQ"/>
    <property type="match status" value="4"/>
</dbReference>
<dbReference type="Pfam" id="PF00063">
    <property type="entry name" value="Myosin_head"/>
    <property type="match status" value="1"/>
</dbReference>
<dbReference type="Pfam" id="PF02736">
    <property type="entry name" value="Myosin_N"/>
    <property type="match status" value="1"/>
</dbReference>
<dbReference type="PRINTS" id="PR00193">
    <property type="entry name" value="MYOSINHEAVY"/>
</dbReference>
<dbReference type="SMART" id="SM01132">
    <property type="entry name" value="DIL"/>
    <property type="match status" value="1"/>
</dbReference>
<dbReference type="SMART" id="SM00015">
    <property type="entry name" value="IQ"/>
    <property type="match status" value="5"/>
</dbReference>
<dbReference type="SMART" id="SM00242">
    <property type="entry name" value="MYSc"/>
    <property type="match status" value="1"/>
</dbReference>
<dbReference type="SUPFAM" id="SSF52540">
    <property type="entry name" value="P-loop containing nucleoside triphosphate hydrolases"/>
    <property type="match status" value="2"/>
</dbReference>
<dbReference type="PROSITE" id="PS51126">
    <property type="entry name" value="DILUTE"/>
    <property type="match status" value="1"/>
</dbReference>
<dbReference type="PROSITE" id="PS50096">
    <property type="entry name" value="IQ"/>
    <property type="match status" value="6"/>
</dbReference>
<dbReference type="PROSITE" id="PS51456">
    <property type="entry name" value="MYOSIN_MOTOR"/>
    <property type="match status" value="1"/>
</dbReference>
<dbReference type="PROSITE" id="PS51844">
    <property type="entry name" value="SH3_LIKE"/>
    <property type="match status" value="1"/>
</dbReference>
<keyword id="KW-0009">Actin-binding</keyword>
<keyword id="KW-0067">ATP-binding</keyword>
<keyword id="KW-0112">Calmodulin-binding</keyword>
<keyword id="KW-0175">Coiled coil</keyword>
<keyword id="KW-0505">Motor protein</keyword>
<keyword id="KW-0518">Myosin</keyword>
<keyword id="KW-0547">Nucleotide-binding</keyword>
<keyword id="KW-1185">Reference proteome</keyword>
<keyword id="KW-0677">Repeat</keyword>
<gene>
    <name type="primary">XI-H</name>
    <name type="synonym">XIH</name>
    <name type="ordered locus">At4g28710</name>
    <name type="ORF">F16A16.180</name>
</gene>
<evidence type="ECO:0000250" key="1"/>
<evidence type="ECO:0000255" key="2"/>
<evidence type="ECO:0000255" key="3">
    <source>
        <dbReference type="PROSITE-ProRule" id="PRU00116"/>
    </source>
</evidence>
<evidence type="ECO:0000255" key="4">
    <source>
        <dbReference type="PROSITE-ProRule" id="PRU00503"/>
    </source>
</evidence>
<evidence type="ECO:0000255" key="5">
    <source>
        <dbReference type="PROSITE-ProRule" id="PRU00782"/>
    </source>
</evidence>
<evidence type="ECO:0000255" key="6">
    <source>
        <dbReference type="PROSITE-ProRule" id="PRU01190"/>
    </source>
</evidence>
<evidence type="ECO:0000256" key="7">
    <source>
        <dbReference type="SAM" id="MobiDB-lite"/>
    </source>
</evidence>
<evidence type="ECO:0000305" key="8"/>
<feature type="chain" id="PRO_0000422869" description="Myosin-14">
    <location>
        <begin position="1"/>
        <end position="1516"/>
    </location>
</feature>
<feature type="domain" description="Myosin N-terminal SH3-like" evidence="6">
    <location>
        <begin position="7"/>
        <end position="56"/>
    </location>
</feature>
<feature type="domain" description="Myosin motor" evidence="5">
    <location>
        <begin position="61"/>
        <end position="738"/>
    </location>
</feature>
<feature type="domain" description="IQ 1" evidence="3">
    <location>
        <begin position="741"/>
        <end position="770"/>
    </location>
</feature>
<feature type="domain" description="IQ 2" evidence="3">
    <location>
        <begin position="764"/>
        <end position="793"/>
    </location>
</feature>
<feature type="domain" description="IQ 3" evidence="3">
    <location>
        <begin position="789"/>
        <end position="818"/>
    </location>
</feature>
<feature type="domain" description="IQ 4" evidence="3">
    <location>
        <begin position="812"/>
        <end position="841"/>
    </location>
</feature>
<feature type="domain" description="IQ 5" evidence="3">
    <location>
        <begin position="837"/>
        <end position="866"/>
    </location>
</feature>
<feature type="domain" description="IQ 6" evidence="3">
    <location>
        <begin position="860"/>
        <end position="889"/>
    </location>
</feature>
<feature type="domain" description="Dilute" evidence="4">
    <location>
        <begin position="1158"/>
        <end position="1463"/>
    </location>
</feature>
<feature type="region of interest" description="Actin-binding" evidence="2">
    <location>
        <begin position="494"/>
        <end position="528"/>
    </location>
</feature>
<feature type="region of interest" description="Actin-binding" evidence="2">
    <location>
        <begin position="530"/>
        <end position="553"/>
    </location>
</feature>
<feature type="region of interest" description="Actin-binding" evidence="2">
    <location>
        <begin position="588"/>
        <end position="612"/>
    </location>
</feature>
<feature type="region of interest" description="Actin-binding" evidence="1">
    <location>
        <begin position="612"/>
        <end position="634"/>
    </location>
</feature>
<feature type="region of interest" description="Disordered" evidence="7">
    <location>
        <begin position="1061"/>
        <end position="1085"/>
    </location>
</feature>
<feature type="coiled-coil region" evidence="2">
    <location>
        <begin position="890"/>
        <end position="1056"/>
    </location>
</feature>
<feature type="compositionally biased region" description="Polar residues" evidence="7">
    <location>
        <begin position="1069"/>
        <end position="1084"/>
    </location>
</feature>
<feature type="binding site" evidence="2">
    <location>
        <begin position="155"/>
        <end position="162"/>
    </location>
    <ligand>
        <name>ATP</name>
        <dbReference type="ChEBI" id="CHEBI:30616"/>
    </ligand>
</feature>
<feature type="binding site" evidence="2">
    <location>
        <begin position="208"/>
        <end position="216"/>
    </location>
    <ligand>
        <name>ATP</name>
        <dbReference type="ChEBI" id="CHEBI:30616"/>
    </ligand>
</feature>
<accession>F4JM19</accession>
<accession>Q9M0G3</accession>
<accession>Q9SVT9</accession>